<protein>
    <recommendedName>
        <fullName evidence="1">Tryptophan synthase alpha chain</fullName>
        <ecNumber evidence="1">4.2.1.20</ecNumber>
    </recommendedName>
</protein>
<sequence length="279" mass="28795">MTTRITARFTELAAEGRPGLVTFITAGDPDYDTALSILRGLPEAGADVIEVGIPFTDPMADGPAIQAAGLRALKGGQTLAKTLDMVRAFRDENDTTPVVLMGYYNPIYIYGVPRFIADAKAAGVDGLIVVDLPPEEDNELCLPALDAGLDFIRLATPTTDEKRLPAVLAHTAGFVYYVSITGITGSATPDANAVAGAVARIKQHTTLPVAVGFGVKTPAQAAAIAAGADGVVVGSALVEAVRKTLDEDGKATVNTVPAVTALVQELAEAVRGVNRAAAE</sequence>
<name>TRPA_AZOC5</name>
<evidence type="ECO:0000255" key="1">
    <source>
        <dbReference type="HAMAP-Rule" id="MF_00131"/>
    </source>
</evidence>
<proteinExistence type="inferred from homology"/>
<feature type="chain" id="PRO_1000071422" description="Tryptophan synthase alpha chain">
    <location>
        <begin position="1"/>
        <end position="279"/>
    </location>
</feature>
<feature type="active site" description="Proton acceptor" evidence="1">
    <location>
        <position position="50"/>
    </location>
</feature>
<feature type="active site" description="Proton acceptor" evidence="1">
    <location>
        <position position="61"/>
    </location>
</feature>
<accession>A8HQ60</accession>
<comment type="function">
    <text evidence="1">The alpha subunit is responsible for the aldol cleavage of indoleglycerol phosphate to indole and glyceraldehyde 3-phosphate.</text>
</comment>
<comment type="catalytic activity">
    <reaction evidence="1">
        <text>(1S,2R)-1-C-(indol-3-yl)glycerol 3-phosphate + L-serine = D-glyceraldehyde 3-phosphate + L-tryptophan + H2O</text>
        <dbReference type="Rhea" id="RHEA:10532"/>
        <dbReference type="ChEBI" id="CHEBI:15377"/>
        <dbReference type="ChEBI" id="CHEBI:33384"/>
        <dbReference type="ChEBI" id="CHEBI:57912"/>
        <dbReference type="ChEBI" id="CHEBI:58866"/>
        <dbReference type="ChEBI" id="CHEBI:59776"/>
        <dbReference type="EC" id="4.2.1.20"/>
    </reaction>
</comment>
<comment type="pathway">
    <text evidence="1">Amino-acid biosynthesis; L-tryptophan biosynthesis; L-tryptophan from chorismate: step 5/5.</text>
</comment>
<comment type="subunit">
    <text evidence="1">Tetramer of two alpha and two beta chains.</text>
</comment>
<comment type="similarity">
    <text evidence="1">Belongs to the TrpA family.</text>
</comment>
<dbReference type="EC" id="4.2.1.20" evidence="1"/>
<dbReference type="EMBL" id="AP009384">
    <property type="protein sequence ID" value="BAF87018.1"/>
    <property type="molecule type" value="Genomic_DNA"/>
</dbReference>
<dbReference type="RefSeq" id="WP_012169551.1">
    <property type="nucleotide sequence ID" value="NC_009937.1"/>
</dbReference>
<dbReference type="SMR" id="A8HQ60"/>
<dbReference type="STRING" id="438753.AZC_1020"/>
<dbReference type="KEGG" id="azc:AZC_1020"/>
<dbReference type="eggNOG" id="COG0159">
    <property type="taxonomic scope" value="Bacteria"/>
</dbReference>
<dbReference type="HOGENOM" id="CLU_016734_0_0_5"/>
<dbReference type="UniPathway" id="UPA00035">
    <property type="reaction ID" value="UER00044"/>
</dbReference>
<dbReference type="Proteomes" id="UP000000270">
    <property type="component" value="Chromosome"/>
</dbReference>
<dbReference type="GO" id="GO:0005829">
    <property type="term" value="C:cytosol"/>
    <property type="evidence" value="ECO:0007669"/>
    <property type="project" value="TreeGrafter"/>
</dbReference>
<dbReference type="GO" id="GO:0004834">
    <property type="term" value="F:tryptophan synthase activity"/>
    <property type="evidence" value="ECO:0007669"/>
    <property type="project" value="UniProtKB-UniRule"/>
</dbReference>
<dbReference type="CDD" id="cd04724">
    <property type="entry name" value="Tryptophan_synthase_alpha"/>
    <property type="match status" value="1"/>
</dbReference>
<dbReference type="FunFam" id="3.20.20.70:FF:000037">
    <property type="entry name" value="Tryptophan synthase alpha chain"/>
    <property type="match status" value="1"/>
</dbReference>
<dbReference type="Gene3D" id="3.20.20.70">
    <property type="entry name" value="Aldolase class I"/>
    <property type="match status" value="1"/>
</dbReference>
<dbReference type="HAMAP" id="MF_00131">
    <property type="entry name" value="Trp_synth_alpha"/>
    <property type="match status" value="1"/>
</dbReference>
<dbReference type="InterPro" id="IPR013785">
    <property type="entry name" value="Aldolase_TIM"/>
</dbReference>
<dbReference type="InterPro" id="IPR011060">
    <property type="entry name" value="RibuloseP-bd_barrel"/>
</dbReference>
<dbReference type="InterPro" id="IPR018204">
    <property type="entry name" value="Trp_synthase_alpha_AS"/>
</dbReference>
<dbReference type="InterPro" id="IPR002028">
    <property type="entry name" value="Trp_synthase_suA"/>
</dbReference>
<dbReference type="NCBIfam" id="TIGR00262">
    <property type="entry name" value="trpA"/>
    <property type="match status" value="1"/>
</dbReference>
<dbReference type="PANTHER" id="PTHR43406:SF1">
    <property type="entry name" value="TRYPTOPHAN SYNTHASE ALPHA CHAIN, CHLOROPLASTIC"/>
    <property type="match status" value="1"/>
</dbReference>
<dbReference type="PANTHER" id="PTHR43406">
    <property type="entry name" value="TRYPTOPHAN SYNTHASE, ALPHA CHAIN"/>
    <property type="match status" value="1"/>
</dbReference>
<dbReference type="Pfam" id="PF00290">
    <property type="entry name" value="Trp_syntA"/>
    <property type="match status" value="1"/>
</dbReference>
<dbReference type="SUPFAM" id="SSF51366">
    <property type="entry name" value="Ribulose-phoshate binding barrel"/>
    <property type="match status" value="1"/>
</dbReference>
<dbReference type="PROSITE" id="PS00167">
    <property type="entry name" value="TRP_SYNTHASE_ALPHA"/>
    <property type="match status" value="1"/>
</dbReference>
<reference key="1">
    <citation type="submission" date="2007-04" db="EMBL/GenBank/DDBJ databases">
        <title>Complete genome sequence of the nitrogen-fixing bacterium Azorhizobium caulinodans ORS571.</title>
        <authorList>
            <person name="Lee K.B."/>
            <person name="Backer P.D."/>
            <person name="Aono T."/>
            <person name="Liu C.T."/>
            <person name="Suzuki S."/>
            <person name="Suzuki T."/>
            <person name="Kaneko T."/>
            <person name="Yamada M."/>
            <person name="Tabata S."/>
            <person name="Kupfer D.M."/>
            <person name="Najar F.Z."/>
            <person name="Wiley G.B."/>
            <person name="Roe B."/>
            <person name="Binnewies T."/>
            <person name="Ussery D."/>
            <person name="Vereecke D."/>
            <person name="Gevers D."/>
            <person name="Holsters M."/>
            <person name="Oyaizu H."/>
        </authorList>
    </citation>
    <scope>NUCLEOTIDE SEQUENCE [LARGE SCALE GENOMIC DNA]</scope>
    <source>
        <strain>ATCC 43989 / DSM 5975 / JCM 20966 / LMG 6465 / NBRC 14845 / NCIMB 13405 / ORS 571</strain>
    </source>
</reference>
<gene>
    <name evidence="1" type="primary">trpA</name>
    <name type="ordered locus">AZC_1020</name>
</gene>
<keyword id="KW-0028">Amino-acid biosynthesis</keyword>
<keyword id="KW-0057">Aromatic amino acid biosynthesis</keyword>
<keyword id="KW-0456">Lyase</keyword>
<keyword id="KW-1185">Reference proteome</keyword>
<keyword id="KW-0822">Tryptophan biosynthesis</keyword>
<organism>
    <name type="scientific">Azorhizobium caulinodans (strain ATCC 43989 / DSM 5975 / JCM 20966 / LMG 6465 / NBRC 14845 / NCIMB 13405 / ORS 571)</name>
    <dbReference type="NCBI Taxonomy" id="438753"/>
    <lineage>
        <taxon>Bacteria</taxon>
        <taxon>Pseudomonadati</taxon>
        <taxon>Pseudomonadota</taxon>
        <taxon>Alphaproteobacteria</taxon>
        <taxon>Hyphomicrobiales</taxon>
        <taxon>Xanthobacteraceae</taxon>
        <taxon>Azorhizobium</taxon>
    </lineage>
</organism>